<organism>
    <name type="scientific">Shigella dysenteriae serotype 1 (strain Sd197)</name>
    <dbReference type="NCBI Taxonomy" id="300267"/>
    <lineage>
        <taxon>Bacteria</taxon>
        <taxon>Pseudomonadati</taxon>
        <taxon>Pseudomonadota</taxon>
        <taxon>Gammaproteobacteria</taxon>
        <taxon>Enterobacterales</taxon>
        <taxon>Enterobacteriaceae</taxon>
        <taxon>Shigella</taxon>
    </lineage>
</organism>
<sequence>MAELLLGVNIDHIATLRNARGTAYPDPVQAAFIAEQAGADGITVHLREDRRHITDRDVRILRQTLDTRMNLEMAVTEEMLAIAVETKPHFCCLVPEKRQEVTTEGGQDVAGQRDKMRDACKRLADAGIQVSLFIDADEEQIKAAAEVGAPFIEIHTGCYADAKTDAEQAQELARIAKAATFAASLGLKVNAGHGLTYHNVKAIAAIPEMHELNIGHAIIGRAVMTGLKDAVAEMKRLMLEARG</sequence>
<dbReference type="EC" id="2.6.99.2" evidence="1"/>
<dbReference type="EMBL" id="CP000034">
    <property type="protein sequence ID" value="ABB62848.1"/>
    <property type="molecule type" value="Genomic_DNA"/>
</dbReference>
<dbReference type="RefSeq" id="WP_005017178.1">
    <property type="nucleotide sequence ID" value="NC_007606.1"/>
</dbReference>
<dbReference type="RefSeq" id="YP_404339.1">
    <property type="nucleotide sequence ID" value="NC_007606.1"/>
</dbReference>
<dbReference type="SMR" id="Q32CV7"/>
<dbReference type="STRING" id="300267.SDY_2805"/>
<dbReference type="EnsemblBacteria" id="ABB62848">
    <property type="protein sequence ID" value="ABB62848"/>
    <property type="gene ID" value="SDY_2805"/>
</dbReference>
<dbReference type="KEGG" id="sdy:SDY_2805"/>
<dbReference type="PATRIC" id="fig|300267.13.peg.3380"/>
<dbReference type="HOGENOM" id="CLU_074563_0_0_6"/>
<dbReference type="UniPathway" id="UPA00244">
    <property type="reaction ID" value="UER00313"/>
</dbReference>
<dbReference type="Proteomes" id="UP000002716">
    <property type="component" value="Chromosome"/>
</dbReference>
<dbReference type="GO" id="GO:0005829">
    <property type="term" value="C:cytosol"/>
    <property type="evidence" value="ECO:0007669"/>
    <property type="project" value="TreeGrafter"/>
</dbReference>
<dbReference type="GO" id="GO:0033856">
    <property type="term" value="F:pyridoxine 5'-phosphate synthase activity"/>
    <property type="evidence" value="ECO:0007669"/>
    <property type="project" value="UniProtKB-EC"/>
</dbReference>
<dbReference type="GO" id="GO:0008615">
    <property type="term" value="P:pyridoxine biosynthetic process"/>
    <property type="evidence" value="ECO:0007669"/>
    <property type="project" value="UniProtKB-UniRule"/>
</dbReference>
<dbReference type="CDD" id="cd00003">
    <property type="entry name" value="PNPsynthase"/>
    <property type="match status" value="1"/>
</dbReference>
<dbReference type="FunFam" id="3.20.20.70:FF:000042">
    <property type="entry name" value="Pyridoxine 5'-phosphate synthase"/>
    <property type="match status" value="1"/>
</dbReference>
<dbReference type="Gene3D" id="3.20.20.70">
    <property type="entry name" value="Aldolase class I"/>
    <property type="match status" value="1"/>
</dbReference>
<dbReference type="HAMAP" id="MF_00279">
    <property type="entry name" value="PdxJ"/>
    <property type="match status" value="1"/>
</dbReference>
<dbReference type="InterPro" id="IPR013785">
    <property type="entry name" value="Aldolase_TIM"/>
</dbReference>
<dbReference type="InterPro" id="IPR004569">
    <property type="entry name" value="PyrdxlP_synth_PdxJ"/>
</dbReference>
<dbReference type="InterPro" id="IPR036130">
    <property type="entry name" value="Pyridoxine-5'_phos_synth"/>
</dbReference>
<dbReference type="NCBIfam" id="TIGR00559">
    <property type="entry name" value="pdxJ"/>
    <property type="match status" value="1"/>
</dbReference>
<dbReference type="NCBIfam" id="NF003623">
    <property type="entry name" value="PRK05265.1-1"/>
    <property type="match status" value="1"/>
</dbReference>
<dbReference type="NCBIfam" id="NF003624">
    <property type="entry name" value="PRK05265.1-2"/>
    <property type="match status" value="1"/>
</dbReference>
<dbReference type="NCBIfam" id="NF003625">
    <property type="entry name" value="PRK05265.1-3"/>
    <property type="match status" value="1"/>
</dbReference>
<dbReference type="NCBIfam" id="NF003626">
    <property type="entry name" value="PRK05265.1-4"/>
    <property type="match status" value="1"/>
</dbReference>
<dbReference type="NCBIfam" id="NF003627">
    <property type="entry name" value="PRK05265.1-5"/>
    <property type="match status" value="1"/>
</dbReference>
<dbReference type="PANTHER" id="PTHR30456">
    <property type="entry name" value="PYRIDOXINE 5'-PHOSPHATE SYNTHASE"/>
    <property type="match status" value="1"/>
</dbReference>
<dbReference type="PANTHER" id="PTHR30456:SF0">
    <property type="entry name" value="PYRIDOXINE 5'-PHOSPHATE SYNTHASE"/>
    <property type="match status" value="1"/>
</dbReference>
<dbReference type="Pfam" id="PF03740">
    <property type="entry name" value="PdxJ"/>
    <property type="match status" value="1"/>
</dbReference>
<dbReference type="SUPFAM" id="SSF63892">
    <property type="entry name" value="Pyridoxine 5'-phosphate synthase"/>
    <property type="match status" value="1"/>
</dbReference>
<keyword id="KW-0963">Cytoplasm</keyword>
<keyword id="KW-0664">Pyridoxine biosynthesis</keyword>
<keyword id="KW-1185">Reference proteome</keyword>
<keyword id="KW-0808">Transferase</keyword>
<accession>Q32CV7</accession>
<protein>
    <recommendedName>
        <fullName evidence="1">Pyridoxine 5'-phosphate synthase</fullName>
        <shortName evidence="1">PNP synthase</shortName>
        <ecNumber evidence="1">2.6.99.2</ecNumber>
    </recommendedName>
</protein>
<evidence type="ECO:0000255" key="1">
    <source>
        <dbReference type="HAMAP-Rule" id="MF_00279"/>
    </source>
</evidence>
<gene>
    <name evidence="1" type="primary">pdxJ</name>
    <name type="ordered locus">SDY_2805</name>
</gene>
<comment type="function">
    <text evidence="1">Catalyzes the complicated ring closure reaction between the two acyclic compounds 1-deoxy-D-xylulose-5-phosphate (DXP) and 3-amino-2-oxopropyl phosphate (1-amino-acetone-3-phosphate or AAP) to form pyridoxine 5'-phosphate (PNP) and inorganic phosphate.</text>
</comment>
<comment type="catalytic activity">
    <reaction evidence="1">
        <text>3-amino-2-oxopropyl phosphate + 1-deoxy-D-xylulose 5-phosphate = pyridoxine 5'-phosphate + phosphate + 2 H2O + H(+)</text>
        <dbReference type="Rhea" id="RHEA:15265"/>
        <dbReference type="ChEBI" id="CHEBI:15377"/>
        <dbReference type="ChEBI" id="CHEBI:15378"/>
        <dbReference type="ChEBI" id="CHEBI:43474"/>
        <dbReference type="ChEBI" id="CHEBI:57279"/>
        <dbReference type="ChEBI" id="CHEBI:57792"/>
        <dbReference type="ChEBI" id="CHEBI:58589"/>
        <dbReference type="EC" id="2.6.99.2"/>
    </reaction>
</comment>
<comment type="pathway">
    <text evidence="1">Cofactor biosynthesis; pyridoxine 5'-phosphate biosynthesis; pyridoxine 5'-phosphate from D-erythrose 4-phosphate: step 5/5.</text>
</comment>
<comment type="subunit">
    <text evidence="1">Homooctamer; tetramer of dimers.</text>
</comment>
<comment type="subcellular location">
    <subcellularLocation>
        <location evidence="1">Cytoplasm</location>
    </subcellularLocation>
</comment>
<comment type="similarity">
    <text evidence="1">Belongs to the PNP synthase family.</text>
</comment>
<reference key="1">
    <citation type="journal article" date="2005" name="Nucleic Acids Res.">
        <title>Genome dynamics and diversity of Shigella species, the etiologic agents of bacillary dysentery.</title>
        <authorList>
            <person name="Yang F."/>
            <person name="Yang J."/>
            <person name="Zhang X."/>
            <person name="Chen L."/>
            <person name="Jiang Y."/>
            <person name="Yan Y."/>
            <person name="Tang X."/>
            <person name="Wang J."/>
            <person name="Xiong Z."/>
            <person name="Dong J."/>
            <person name="Xue Y."/>
            <person name="Zhu Y."/>
            <person name="Xu X."/>
            <person name="Sun L."/>
            <person name="Chen S."/>
            <person name="Nie H."/>
            <person name="Peng J."/>
            <person name="Xu J."/>
            <person name="Wang Y."/>
            <person name="Yuan Z."/>
            <person name="Wen Y."/>
            <person name="Yao Z."/>
            <person name="Shen Y."/>
            <person name="Qiang B."/>
            <person name="Hou Y."/>
            <person name="Yu J."/>
            <person name="Jin Q."/>
        </authorList>
    </citation>
    <scope>NUCLEOTIDE SEQUENCE [LARGE SCALE GENOMIC DNA]</scope>
    <source>
        <strain>Sd197</strain>
    </source>
</reference>
<name>PDXJ_SHIDS</name>
<proteinExistence type="inferred from homology"/>
<feature type="chain" id="PRO_0000231846" description="Pyridoxine 5'-phosphate synthase">
    <location>
        <begin position="1"/>
        <end position="243"/>
    </location>
</feature>
<feature type="active site" description="Proton acceptor" evidence="1">
    <location>
        <position position="45"/>
    </location>
</feature>
<feature type="active site" description="Proton acceptor" evidence="1">
    <location>
        <position position="72"/>
    </location>
</feature>
<feature type="active site" description="Proton donor" evidence="1">
    <location>
        <position position="193"/>
    </location>
</feature>
<feature type="binding site" evidence="1">
    <location>
        <position position="9"/>
    </location>
    <ligand>
        <name>3-amino-2-oxopropyl phosphate</name>
        <dbReference type="ChEBI" id="CHEBI:57279"/>
    </ligand>
</feature>
<feature type="binding site" evidence="1">
    <location>
        <begin position="11"/>
        <end position="12"/>
    </location>
    <ligand>
        <name>1-deoxy-D-xylulose 5-phosphate</name>
        <dbReference type="ChEBI" id="CHEBI:57792"/>
    </ligand>
</feature>
<feature type="binding site" evidence="1">
    <location>
        <position position="20"/>
    </location>
    <ligand>
        <name>3-amino-2-oxopropyl phosphate</name>
        <dbReference type="ChEBI" id="CHEBI:57279"/>
    </ligand>
</feature>
<feature type="binding site" evidence="1">
    <location>
        <position position="47"/>
    </location>
    <ligand>
        <name>1-deoxy-D-xylulose 5-phosphate</name>
        <dbReference type="ChEBI" id="CHEBI:57792"/>
    </ligand>
</feature>
<feature type="binding site" evidence="1">
    <location>
        <position position="52"/>
    </location>
    <ligand>
        <name>1-deoxy-D-xylulose 5-phosphate</name>
        <dbReference type="ChEBI" id="CHEBI:57792"/>
    </ligand>
</feature>
<feature type="binding site" evidence="1">
    <location>
        <position position="102"/>
    </location>
    <ligand>
        <name>1-deoxy-D-xylulose 5-phosphate</name>
        <dbReference type="ChEBI" id="CHEBI:57792"/>
    </ligand>
</feature>
<feature type="binding site" evidence="1">
    <location>
        <position position="194"/>
    </location>
    <ligand>
        <name>3-amino-2-oxopropyl phosphate</name>
        <dbReference type="ChEBI" id="CHEBI:57279"/>
    </ligand>
</feature>
<feature type="binding site" evidence="1">
    <location>
        <begin position="215"/>
        <end position="216"/>
    </location>
    <ligand>
        <name>3-amino-2-oxopropyl phosphate</name>
        <dbReference type="ChEBI" id="CHEBI:57279"/>
    </ligand>
</feature>
<feature type="site" description="Transition state stabilizer" evidence="1">
    <location>
        <position position="153"/>
    </location>
</feature>